<evidence type="ECO:0000255" key="1">
    <source>
        <dbReference type="HAMAP-Rule" id="MF_01017"/>
    </source>
</evidence>
<sequence length="198" mass="20852">MAKILVLYYSMYGHIETMAHAVAEGAKKVDGAEVIIKRVPETMPPEIFAKAGGKTQNAPVATPQELADYDAIIFGTPTRFGNMSGQMRTFLDQTGGLWASGALYGKLGSVFSSTGTGGGQEQTITSTWTTLAHHGMVIVPIGYAAQELFDVSQVRGGTPYGATTIAGGDGSRQPSQEELSIARYQGEYVAGLAVKLNG</sequence>
<proteinExistence type="inferred from homology"/>
<protein>
    <recommendedName>
        <fullName evidence="1">NAD(P)H dehydrogenase (quinone)</fullName>
        <ecNumber evidence="1">1.6.5.2</ecNumber>
    </recommendedName>
    <alternativeName>
        <fullName>Flavoprotein WrbA</fullName>
    </alternativeName>
    <alternativeName>
        <fullName evidence="1">NAD(P)H:quinone oxidoreductase</fullName>
        <shortName evidence="1">NQO</shortName>
    </alternativeName>
</protein>
<dbReference type="EC" id="1.6.5.2" evidence="1"/>
<dbReference type="EMBL" id="AM933173">
    <property type="protein sequence ID" value="CAR36897.1"/>
    <property type="molecule type" value="Genomic_DNA"/>
</dbReference>
<dbReference type="SMR" id="B5R6H0"/>
<dbReference type="KEGG" id="seg:SG1008"/>
<dbReference type="HOGENOM" id="CLU_051402_0_2_6"/>
<dbReference type="Proteomes" id="UP000008321">
    <property type="component" value="Chromosome"/>
</dbReference>
<dbReference type="GO" id="GO:0016020">
    <property type="term" value="C:membrane"/>
    <property type="evidence" value="ECO:0007669"/>
    <property type="project" value="TreeGrafter"/>
</dbReference>
<dbReference type="GO" id="GO:0050660">
    <property type="term" value="F:flavin adenine dinucleotide binding"/>
    <property type="evidence" value="ECO:0007669"/>
    <property type="project" value="UniProtKB-UniRule"/>
</dbReference>
<dbReference type="GO" id="GO:0010181">
    <property type="term" value="F:FMN binding"/>
    <property type="evidence" value="ECO:0007669"/>
    <property type="project" value="InterPro"/>
</dbReference>
<dbReference type="GO" id="GO:0051287">
    <property type="term" value="F:NAD binding"/>
    <property type="evidence" value="ECO:0007669"/>
    <property type="project" value="UniProtKB-UniRule"/>
</dbReference>
<dbReference type="GO" id="GO:0050136">
    <property type="term" value="F:NADH:ubiquinone reductase (non-electrogenic) activity"/>
    <property type="evidence" value="ECO:0007669"/>
    <property type="project" value="RHEA"/>
</dbReference>
<dbReference type="GO" id="GO:0050661">
    <property type="term" value="F:NADP binding"/>
    <property type="evidence" value="ECO:0007669"/>
    <property type="project" value="UniProtKB-UniRule"/>
</dbReference>
<dbReference type="GO" id="GO:0008753">
    <property type="term" value="F:NADPH dehydrogenase (quinone) activity"/>
    <property type="evidence" value="ECO:0007669"/>
    <property type="project" value="RHEA"/>
</dbReference>
<dbReference type="FunFam" id="3.40.50.360:FF:000004">
    <property type="entry name" value="NAD(P)H dehydrogenase (quinone)"/>
    <property type="match status" value="1"/>
</dbReference>
<dbReference type="Gene3D" id="3.40.50.360">
    <property type="match status" value="1"/>
</dbReference>
<dbReference type="HAMAP" id="MF_01017">
    <property type="entry name" value="NQOR"/>
    <property type="match status" value="1"/>
</dbReference>
<dbReference type="InterPro" id="IPR008254">
    <property type="entry name" value="Flavodoxin/NO_synth"/>
</dbReference>
<dbReference type="InterPro" id="IPR029039">
    <property type="entry name" value="Flavoprotein-like_sf"/>
</dbReference>
<dbReference type="InterPro" id="IPR010089">
    <property type="entry name" value="Flavoprotein_WrbA-like"/>
</dbReference>
<dbReference type="InterPro" id="IPR005025">
    <property type="entry name" value="FMN_Rdtase-like_dom"/>
</dbReference>
<dbReference type="InterPro" id="IPR037513">
    <property type="entry name" value="NQO"/>
</dbReference>
<dbReference type="NCBIfam" id="TIGR01755">
    <property type="entry name" value="flav_wrbA"/>
    <property type="match status" value="1"/>
</dbReference>
<dbReference type="NCBIfam" id="NF002999">
    <property type="entry name" value="PRK03767.1"/>
    <property type="match status" value="1"/>
</dbReference>
<dbReference type="PANTHER" id="PTHR30546">
    <property type="entry name" value="FLAVODOXIN-RELATED PROTEIN WRBA-RELATED"/>
    <property type="match status" value="1"/>
</dbReference>
<dbReference type="PANTHER" id="PTHR30546:SF23">
    <property type="entry name" value="FLAVOPROTEIN-LIKE PROTEIN YCP4-RELATED"/>
    <property type="match status" value="1"/>
</dbReference>
<dbReference type="Pfam" id="PF03358">
    <property type="entry name" value="FMN_red"/>
    <property type="match status" value="1"/>
</dbReference>
<dbReference type="SUPFAM" id="SSF52218">
    <property type="entry name" value="Flavoproteins"/>
    <property type="match status" value="1"/>
</dbReference>
<dbReference type="PROSITE" id="PS50902">
    <property type="entry name" value="FLAVODOXIN_LIKE"/>
    <property type="match status" value="1"/>
</dbReference>
<name>NQOR_SALG2</name>
<comment type="catalytic activity">
    <reaction evidence="1">
        <text>a quinone + NADH + H(+) = a quinol + NAD(+)</text>
        <dbReference type="Rhea" id="RHEA:46160"/>
        <dbReference type="ChEBI" id="CHEBI:15378"/>
        <dbReference type="ChEBI" id="CHEBI:24646"/>
        <dbReference type="ChEBI" id="CHEBI:57540"/>
        <dbReference type="ChEBI" id="CHEBI:57945"/>
        <dbReference type="ChEBI" id="CHEBI:132124"/>
        <dbReference type="EC" id="1.6.5.2"/>
    </reaction>
</comment>
<comment type="catalytic activity">
    <reaction evidence="1">
        <text>a quinone + NADPH + H(+) = a quinol + NADP(+)</text>
        <dbReference type="Rhea" id="RHEA:46164"/>
        <dbReference type="ChEBI" id="CHEBI:15378"/>
        <dbReference type="ChEBI" id="CHEBI:24646"/>
        <dbReference type="ChEBI" id="CHEBI:57783"/>
        <dbReference type="ChEBI" id="CHEBI:58349"/>
        <dbReference type="ChEBI" id="CHEBI:132124"/>
        <dbReference type="EC" id="1.6.5.2"/>
    </reaction>
</comment>
<comment type="cofactor">
    <cofactor evidence="1">
        <name>FMN</name>
        <dbReference type="ChEBI" id="CHEBI:58210"/>
    </cofactor>
    <text evidence="1">Binds 1 FMN per monomer.</text>
</comment>
<comment type="similarity">
    <text evidence="1">Belongs to the WrbA family.</text>
</comment>
<gene>
    <name type="ordered locus">SG1008</name>
</gene>
<keyword id="KW-0285">Flavoprotein</keyword>
<keyword id="KW-0288">FMN</keyword>
<keyword id="KW-0520">NAD</keyword>
<keyword id="KW-0521">NADP</keyword>
<keyword id="KW-0547">Nucleotide-binding</keyword>
<keyword id="KW-0560">Oxidoreductase</keyword>
<reference key="1">
    <citation type="journal article" date="2008" name="Genome Res.">
        <title>Comparative genome analysis of Salmonella enteritidis PT4 and Salmonella gallinarum 287/91 provides insights into evolutionary and host adaptation pathways.</title>
        <authorList>
            <person name="Thomson N.R."/>
            <person name="Clayton D.J."/>
            <person name="Windhorst D."/>
            <person name="Vernikos G."/>
            <person name="Davidson S."/>
            <person name="Churcher C."/>
            <person name="Quail M.A."/>
            <person name="Stevens M."/>
            <person name="Jones M.A."/>
            <person name="Watson M."/>
            <person name="Barron A."/>
            <person name="Layton A."/>
            <person name="Pickard D."/>
            <person name="Kingsley R.A."/>
            <person name="Bignell A."/>
            <person name="Clark L."/>
            <person name="Harris B."/>
            <person name="Ormond D."/>
            <person name="Abdellah Z."/>
            <person name="Brooks K."/>
            <person name="Cherevach I."/>
            <person name="Chillingworth T."/>
            <person name="Woodward J."/>
            <person name="Norberczak H."/>
            <person name="Lord A."/>
            <person name="Arrowsmith C."/>
            <person name="Jagels K."/>
            <person name="Moule S."/>
            <person name="Mungall K."/>
            <person name="Saunders M."/>
            <person name="Whitehead S."/>
            <person name="Chabalgoity J.A."/>
            <person name="Maskell D."/>
            <person name="Humphreys T."/>
            <person name="Roberts M."/>
            <person name="Barrow P.A."/>
            <person name="Dougan G."/>
            <person name="Parkhill J."/>
        </authorList>
    </citation>
    <scope>NUCLEOTIDE SEQUENCE [LARGE SCALE GENOMIC DNA]</scope>
    <source>
        <strain>287/91 / NCTC 13346</strain>
    </source>
</reference>
<feature type="chain" id="PRO_1000200643" description="NAD(P)H dehydrogenase (quinone)">
    <location>
        <begin position="1"/>
        <end position="198"/>
    </location>
</feature>
<feature type="domain" description="Flavodoxin-like" evidence="1">
    <location>
        <begin position="4"/>
        <end position="189"/>
    </location>
</feature>
<feature type="binding site" evidence="1">
    <location>
        <begin position="10"/>
        <end position="15"/>
    </location>
    <ligand>
        <name>FMN</name>
        <dbReference type="ChEBI" id="CHEBI:58210"/>
    </ligand>
</feature>
<feature type="binding site" evidence="1">
    <location>
        <position position="12"/>
    </location>
    <ligand>
        <name>NAD(+)</name>
        <dbReference type="ChEBI" id="CHEBI:57540"/>
    </ligand>
</feature>
<feature type="binding site" evidence="1">
    <location>
        <begin position="78"/>
        <end position="80"/>
    </location>
    <ligand>
        <name>FMN</name>
        <dbReference type="ChEBI" id="CHEBI:58210"/>
    </ligand>
</feature>
<feature type="binding site" evidence="1">
    <location>
        <position position="98"/>
    </location>
    <ligand>
        <name>substrate</name>
    </ligand>
</feature>
<feature type="binding site" evidence="1">
    <location>
        <begin position="113"/>
        <end position="118"/>
    </location>
    <ligand>
        <name>FMN</name>
        <dbReference type="ChEBI" id="CHEBI:58210"/>
    </ligand>
</feature>
<feature type="binding site" evidence="1">
    <location>
        <position position="133"/>
    </location>
    <ligand>
        <name>FMN</name>
        <dbReference type="ChEBI" id="CHEBI:58210"/>
    </ligand>
</feature>
<accession>B5R6H0</accession>
<organism>
    <name type="scientific">Salmonella gallinarum (strain 287/91 / NCTC 13346)</name>
    <dbReference type="NCBI Taxonomy" id="550538"/>
    <lineage>
        <taxon>Bacteria</taxon>
        <taxon>Pseudomonadati</taxon>
        <taxon>Pseudomonadota</taxon>
        <taxon>Gammaproteobacteria</taxon>
        <taxon>Enterobacterales</taxon>
        <taxon>Enterobacteriaceae</taxon>
        <taxon>Salmonella</taxon>
    </lineage>
</organism>